<reference key="1">
    <citation type="submission" date="2008-05" db="EMBL/GenBank/DDBJ databases">
        <title>Genome sequence of Helicobacter pylori from the remote Amazon: traces of Asian ancestry of the first Americans.</title>
        <authorList>
            <person name="Kersulyte D."/>
            <person name="Kalia A."/>
            <person name="Gilman R.H."/>
            <person name="Berg D.E."/>
        </authorList>
    </citation>
    <scope>NUCLEOTIDE SEQUENCE [LARGE SCALE GENOMIC DNA]</scope>
    <source>
        <strain>Shi470</strain>
    </source>
</reference>
<dbReference type="EC" id="2.3.1.129" evidence="1"/>
<dbReference type="EMBL" id="CP001072">
    <property type="protein sequence ID" value="ACD48821.1"/>
    <property type="molecule type" value="Genomic_DNA"/>
</dbReference>
<dbReference type="RefSeq" id="WP_000034078.1">
    <property type="nucleotide sequence ID" value="NC_010698.2"/>
</dbReference>
<dbReference type="SMR" id="B2UVD9"/>
<dbReference type="KEGG" id="hps:HPSH_07115"/>
<dbReference type="HOGENOM" id="CLU_061249_0_0_7"/>
<dbReference type="UniPathway" id="UPA00359">
    <property type="reaction ID" value="UER00477"/>
</dbReference>
<dbReference type="GO" id="GO:0005737">
    <property type="term" value="C:cytoplasm"/>
    <property type="evidence" value="ECO:0007669"/>
    <property type="project" value="UniProtKB-SubCell"/>
</dbReference>
<dbReference type="GO" id="GO:0016020">
    <property type="term" value="C:membrane"/>
    <property type="evidence" value="ECO:0007669"/>
    <property type="project" value="GOC"/>
</dbReference>
<dbReference type="GO" id="GO:0008780">
    <property type="term" value="F:acyl-[acyl-carrier-protein]-UDP-N-acetylglucosamine O-acyltransferase activity"/>
    <property type="evidence" value="ECO:0007669"/>
    <property type="project" value="UniProtKB-UniRule"/>
</dbReference>
<dbReference type="GO" id="GO:0009245">
    <property type="term" value="P:lipid A biosynthetic process"/>
    <property type="evidence" value="ECO:0007669"/>
    <property type="project" value="UniProtKB-UniRule"/>
</dbReference>
<dbReference type="CDD" id="cd03351">
    <property type="entry name" value="LbH_UDP-GlcNAc_AT"/>
    <property type="match status" value="1"/>
</dbReference>
<dbReference type="Gene3D" id="2.160.10.10">
    <property type="entry name" value="Hexapeptide repeat proteins"/>
    <property type="match status" value="1"/>
</dbReference>
<dbReference type="Gene3D" id="1.20.1180.10">
    <property type="entry name" value="Udp N-acetylglucosamine O-acyltransferase, C-terminal domain"/>
    <property type="match status" value="1"/>
</dbReference>
<dbReference type="HAMAP" id="MF_00387">
    <property type="entry name" value="LpxA"/>
    <property type="match status" value="1"/>
</dbReference>
<dbReference type="InterPro" id="IPR029098">
    <property type="entry name" value="Acetyltransf_C"/>
</dbReference>
<dbReference type="InterPro" id="IPR037157">
    <property type="entry name" value="Acetyltransf_C_sf"/>
</dbReference>
<dbReference type="InterPro" id="IPR001451">
    <property type="entry name" value="Hexapep"/>
</dbReference>
<dbReference type="InterPro" id="IPR010137">
    <property type="entry name" value="Lipid_A_LpxA"/>
</dbReference>
<dbReference type="InterPro" id="IPR011004">
    <property type="entry name" value="Trimer_LpxA-like_sf"/>
</dbReference>
<dbReference type="NCBIfam" id="TIGR01852">
    <property type="entry name" value="lipid_A_lpxA"/>
    <property type="match status" value="1"/>
</dbReference>
<dbReference type="NCBIfam" id="NF003657">
    <property type="entry name" value="PRK05289.1"/>
    <property type="match status" value="1"/>
</dbReference>
<dbReference type="PANTHER" id="PTHR43480">
    <property type="entry name" value="ACYL-[ACYL-CARRIER-PROTEIN]--UDP-N-ACETYLGLUCOSAMINE O-ACYLTRANSFERASE"/>
    <property type="match status" value="1"/>
</dbReference>
<dbReference type="PANTHER" id="PTHR43480:SF1">
    <property type="entry name" value="ACYL-[ACYL-CARRIER-PROTEIN]--UDP-N-ACETYLGLUCOSAMINE O-ACYLTRANSFERASE, MITOCHONDRIAL-RELATED"/>
    <property type="match status" value="1"/>
</dbReference>
<dbReference type="Pfam" id="PF13720">
    <property type="entry name" value="Acetyltransf_11"/>
    <property type="match status" value="1"/>
</dbReference>
<dbReference type="Pfam" id="PF00132">
    <property type="entry name" value="Hexapep"/>
    <property type="match status" value="2"/>
</dbReference>
<dbReference type="PIRSF" id="PIRSF000456">
    <property type="entry name" value="UDP-GlcNAc_acltr"/>
    <property type="match status" value="1"/>
</dbReference>
<dbReference type="SUPFAM" id="SSF51161">
    <property type="entry name" value="Trimeric LpxA-like enzymes"/>
    <property type="match status" value="1"/>
</dbReference>
<gene>
    <name evidence="1" type="primary">lpxA</name>
    <name type="ordered locus">HPSH_07115</name>
</gene>
<proteinExistence type="inferred from homology"/>
<accession>B2UVD9</accession>
<evidence type="ECO:0000255" key="1">
    <source>
        <dbReference type="HAMAP-Rule" id="MF_00387"/>
    </source>
</evidence>
<keyword id="KW-0012">Acyltransferase</keyword>
<keyword id="KW-0963">Cytoplasm</keyword>
<keyword id="KW-0441">Lipid A biosynthesis</keyword>
<keyword id="KW-0444">Lipid biosynthesis</keyword>
<keyword id="KW-0443">Lipid metabolism</keyword>
<keyword id="KW-0677">Repeat</keyword>
<keyword id="KW-0808">Transferase</keyword>
<protein>
    <recommendedName>
        <fullName evidence="1">Acyl-[acyl-carrier-protein]--UDP-N-acetylglucosamine O-acyltransferase</fullName>
        <shortName evidence="1">UDP-N-acetylglucosamine acyltransferase</shortName>
        <ecNumber evidence="1">2.3.1.129</ecNumber>
    </recommendedName>
</protein>
<sequence>MSKIAKTAIISPKAEIGKGVEIGEFCVIGDHIKLNDGVKLHNNVTLQGHTFIGKNTEIFPFAALGTQPQDLKYKGEYSELIIGEDNLIREFCMINPGTEGGIKKTIIGDKNLLMAYVHVAHDCVIGSHCIFANGVTLAGHIEIGDYVNIGGLTAIHQFVRIAKGCMIAGKSALGKDVPPYCTVEGNRAFIRGLNRHRMRQLLESKDIDFIHVLYKRLFRPVPSLRESAKLELEEHPNNPFVKEICSFILESSRGVAYKSSEYSNEEKQEE</sequence>
<name>LPXA_HELPS</name>
<feature type="chain" id="PRO_1000122712" description="Acyl-[acyl-carrier-protein]--UDP-N-acetylglucosamine O-acyltransferase">
    <location>
        <begin position="1"/>
        <end position="270"/>
    </location>
</feature>
<organism>
    <name type="scientific">Helicobacter pylori (strain Shi470)</name>
    <dbReference type="NCBI Taxonomy" id="512562"/>
    <lineage>
        <taxon>Bacteria</taxon>
        <taxon>Pseudomonadati</taxon>
        <taxon>Campylobacterota</taxon>
        <taxon>Epsilonproteobacteria</taxon>
        <taxon>Campylobacterales</taxon>
        <taxon>Helicobacteraceae</taxon>
        <taxon>Helicobacter</taxon>
    </lineage>
</organism>
<comment type="function">
    <text evidence="1">Involved in the biosynthesis of lipid A, a phosphorylated glycolipid that anchors the lipopolysaccharide to the outer membrane of the cell.</text>
</comment>
<comment type="catalytic activity">
    <reaction evidence="1">
        <text>a (3R)-hydroxyacyl-[ACP] + UDP-N-acetyl-alpha-D-glucosamine = a UDP-3-O-[(3R)-3-hydroxyacyl]-N-acetyl-alpha-D-glucosamine + holo-[ACP]</text>
        <dbReference type="Rhea" id="RHEA:67812"/>
        <dbReference type="Rhea" id="RHEA-COMP:9685"/>
        <dbReference type="Rhea" id="RHEA-COMP:9945"/>
        <dbReference type="ChEBI" id="CHEBI:57705"/>
        <dbReference type="ChEBI" id="CHEBI:64479"/>
        <dbReference type="ChEBI" id="CHEBI:78827"/>
        <dbReference type="ChEBI" id="CHEBI:173225"/>
        <dbReference type="EC" id="2.3.1.129"/>
    </reaction>
</comment>
<comment type="pathway">
    <text evidence="1">Glycolipid biosynthesis; lipid IV(A) biosynthesis; lipid IV(A) from (3R)-3-hydroxytetradecanoyl-[acyl-carrier-protein] and UDP-N-acetyl-alpha-D-glucosamine: step 1/6.</text>
</comment>
<comment type="subunit">
    <text evidence="1">Homotrimer.</text>
</comment>
<comment type="subcellular location">
    <subcellularLocation>
        <location evidence="1">Cytoplasm</location>
    </subcellularLocation>
</comment>
<comment type="similarity">
    <text evidence="1">Belongs to the transferase hexapeptide repeat family. LpxA subfamily.</text>
</comment>